<name>RR6_GUITH</name>
<keyword id="KW-0150">Chloroplast</keyword>
<keyword id="KW-0934">Plastid</keyword>
<keyword id="KW-0687">Ribonucleoprotein</keyword>
<keyword id="KW-0689">Ribosomal protein</keyword>
<keyword id="KW-0694">RNA-binding</keyword>
<keyword id="KW-0699">rRNA-binding</keyword>
<geneLocation type="chloroplast"/>
<protein>
    <recommendedName>
        <fullName evidence="2">Small ribosomal subunit protein bS6c</fullName>
    </recommendedName>
    <alternativeName>
        <fullName>30S ribosomal protein S6, chloroplastic</fullName>
    </alternativeName>
</protein>
<reference key="1">
    <citation type="journal article" date="1999" name="J. Mol. Evol.">
        <title>The plastid genome of the cryptophyte alga, Guillardia theta: complete sequence and conserved synteny groups confirm its common ancestry with red algae.</title>
        <authorList>
            <person name="Douglas S.E."/>
            <person name="Penny S.L."/>
        </authorList>
    </citation>
    <scope>NUCLEOTIDE SEQUENCE [LARGE SCALE GENOMIC DNA]</scope>
</reference>
<accession>O78447</accession>
<proteinExistence type="inferred from homology"/>
<sequence>MTKLNSYETLYIVKPELTEDSLAKLIESYQGLLLERGAKNIITQNRGRRTLKYMIKKYKDAHYVQMNYEGNGEVIQLLERAMKINESIVRFLTTAI</sequence>
<dbReference type="EMBL" id="AF041468">
    <property type="protein sequence ID" value="AAC35634.1"/>
    <property type="molecule type" value="Genomic_DNA"/>
</dbReference>
<dbReference type="RefSeq" id="NP_050700.1">
    <property type="nucleotide sequence ID" value="NC_000926.1"/>
</dbReference>
<dbReference type="SMR" id="O78447"/>
<dbReference type="GeneID" id="856991"/>
<dbReference type="HOGENOM" id="CLU_113441_5_2_1"/>
<dbReference type="OMA" id="NTYETIY"/>
<dbReference type="GO" id="GO:0009507">
    <property type="term" value="C:chloroplast"/>
    <property type="evidence" value="ECO:0007669"/>
    <property type="project" value="UniProtKB-SubCell"/>
</dbReference>
<dbReference type="GO" id="GO:1990904">
    <property type="term" value="C:ribonucleoprotein complex"/>
    <property type="evidence" value="ECO:0007669"/>
    <property type="project" value="UniProtKB-KW"/>
</dbReference>
<dbReference type="GO" id="GO:0005840">
    <property type="term" value="C:ribosome"/>
    <property type="evidence" value="ECO:0007669"/>
    <property type="project" value="UniProtKB-KW"/>
</dbReference>
<dbReference type="GO" id="GO:0070181">
    <property type="term" value="F:small ribosomal subunit rRNA binding"/>
    <property type="evidence" value="ECO:0007669"/>
    <property type="project" value="TreeGrafter"/>
</dbReference>
<dbReference type="GO" id="GO:0003735">
    <property type="term" value="F:structural constituent of ribosome"/>
    <property type="evidence" value="ECO:0007669"/>
    <property type="project" value="InterPro"/>
</dbReference>
<dbReference type="GO" id="GO:0006412">
    <property type="term" value="P:translation"/>
    <property type="evidence" value="ECO:0007669"/>
    <property type="project" value="UniProtKB-UniRule"/>
</dbReference>
<dbReference type="CDD" id="cd15487">
    <property type="entry name" value="bS6_chloro_cyano"/>
    <property type="match status" value="1"/>
</dbReference>
<dbReference type="Gene3D" id="3.30.70.60">
    <property type="match status" value="1"/>
</dbReference>
<dbReference type="HAMAP" id="MF_00360">
    <property type="entry name" value="Ribosomal_bS6"/>
    <property type="match status" value="1"/>
</dbReference>
<dbReference type="InterPro" id="IPR000529">
    <property type="entry name" value="Ribosomal_bS6"/>
</dbReference>
<dbReference type="InterPro" id="IPR035980">
    <property type="entry name" value="Ribosomal_bS6_sf"/>
</dbReference>
<dbReference type="InterPro" id="IPR020814">
    <property type="entry name" value="Ribosomal_S6_plastid/chlpt"/>
</dbReference>
<dbReference type="InterPro" id="IPR014717">
    <property type="entry name" value="Transl_elong_EF1B/ribsomal_bS6"/>
</dbReference>
<dbReference type="NCBIfam" id="TIGR00166">
    <property type="entry name" value="S6"/>
    <property type="match status" value="1"/>
</dbReference>
<dbReference type="PANTHER" id="PTHR21011">
    <property type="entry name" value="MITOCHONDRIAL 28S RIBOSOMAL PROTEIN S6"/>
    <property type="match status" value="1"/>
</dbReference>
<dbReference type="PANTHER" id="PTHR21011:SF1">
    <property type="entry name" value="SMALL RIBOSOMAL SUBUNIT PROTEIN BS6M"/>
    <property type="match status" value="1"/>
</dbReference>
<dbReference type="Pfam" id="PF01250">
    <property type="entry name" value="Ribosomal_S6"/>
    <property type="match status" value="1"/>
</dbReference>
<dbReference type="SUPFAM" id="SSF54995">
    <property type="entry name" value="Ribosomal protein S6"/>
    <property type="match status" value="1"/>
</dbReference>
<evidence type="ECO:0000250" key="1"/>
<evidence type="ECO:0000305" key="2"/>
<comment type="function">
    <text evidence="1">Binds together with bS18 to 16S ribosomal RNA.</text>
</comment>
<comment type="subcellular location">
    <subcellularLocation>
        <location>Plastid</location>
        <location>Chloroplast</location>
    </subcellularLocation>
</comment>
<comment type="similarity">
    <text evidence="2">Belongs to the bacterial ribosomal protein bS6 family.</text>
</comment>
<feature type="chain" id="PRO_0000176888" description="Small ribosomal subunit protein bS6c">
    <location>
        <begin position="1"/>
        <end position="96"/>
    </location>
</feature>
<organism>
    <name type="scientific">Guillardia theta</name>
    <name type="common">Cryptophyte</name>
    <name type="synonym">Cryptomonas phi</name>
    <dbReference type="NCBI Taxonomy" id="55529"/>
    <lineage>
        <taxon>Eukaryota</taxon>
        <taxon>Cryptophyceae</taxon>
        <taxon>Pyrenomonadales</taxon>
        <taxon>Geminigeraceae</taxon>
        <taxon>Guillardia</taxon>
    </lineage>
</organism>
<gene>
    <name type="primary">rps6</name>
</gene>